<name>EFTS_PSEAB</name>
<accession>Q02RC7</accession>
<evidence type="ECO:0000255" key="1">
    <source>
        <dbReference type="HAMAP-Rule" id="MF_00050"/>
    </source>
</evidence>
<gene>
    <name evidence="1" type="primary">tsf</name>
    <name type="ordered locus">PA14_17070</name>
</gene>
<proteinExistence type="inferred from homology"/>
<comment type="function">
    <text evidence="1">Associates with the EF-Tu.GDP complex and induces the exchange of GDP to GTP. It remains bound to the aminoacyl-tRNA.EF-Tu.GTP complex up to the GTP hydrolysis stage on the ribosome.</text>
</comment>
<comment type="subcellular location">
    <subcellularLocation>
        <location evidence="1">Cytoplasm</location>
    </subcellularLocation>
</comment>
<comment type="similarity">
    <text evidence="1">Belongs to the EF-Ts family.</text>
</comment>
<keyword id="KW-0963">Cytoplasm</keyword>
<keyword id="KW-0251">Elongation factor</keyword>
<keyword id="KW-0648">Protein biosynthesis</keyword>
<feature type="chain" id="PRO_1000006152" description="Elongation factor Ts">
    <location>
        <begin position="1"/>
        <end position="289"/>
    </location>
</feature>
<feature type="region of interest" description="Involved in Mg(2+) ion dislocation from EF-Tu" evidence="1">
    <location>
        <begin position="82"/>
        <end position="85"/>
    </location>
</feature>
<protein>
    <recommendedName>
        <fullName evidence="1">Elongation factor Ts</fullName>
        <shortName evidence="1">EF-Ts</shortName>
    </recommendedName>
</protein>
<sequence length="289" mass="30653">MAEITAAMVKELRERTGLGMMECKKALTAAGGDIEKAIDDMRAAGAIKAAKKAGNIAAEGSIAVKIAADNKAAVIIEVNSQTDFLALQDDFKGFVAESLEKAFNEKLTDAAPLVEAREEARLALVAKTGENVNIRRLTRVEGDVVGAYLHGHRIGVVVNLKGGNPELAKDIAMHVAASNPQFLSASEVSEEAIAKEKEIFLALNADKIAGKPENIVENMVKGRISKFLAEASLVEQPFVKNPEVKVGDLAKQAGAEIVSFVRYEVGEGIEKAEVDFAAEVAAQVAATKQ</sequence>
<organism>
    <name type="scientific">Pseudomonas aeruginosa (strain UCBPP-PA14)</name>
    <dbReference type="NCBI Taxonomy" id="208963"/>
    <lineage>
        <taxon>Bacteria</taxon>
        <taxon>Pseudomonadati</taxon>
        <taxon>Pseudomonadota</taxon>
        <taxon>Gammaproteobacteria</taxon>
        <taxon>Pseudomonadales</taxon>
        <taxon>Pseudomonadaceae</taxon>
        <taxon>Pseudomonas</taxon>
    </lineage>
</organism>
<reference key="1">
    <citation type="journal article" date="2006" name="Genome Biol.">
        <title>Genomic analysis reveals that Pseudomonas aeruginosa virulence is combinatorial.</title>
        <authorList>
            <person name="Lee D.G."/>
            <person name="Urbach J.M."/>
            <person name="Wu G."/>
            <person name="Liberati N.T."/>
            <person name="Feinbaum R.L."/>
            <person name="Miyata S."/>
            <person name="Diggins L.T."/>
            <person name="He J."/>
            <person name="Saucier M."/>
            <person name="Deziel E."/>
            <person name="Friedman L."/>
            <person name="Li L."/>
            <person name="Grills G."/>
            <person name="Montgomery K."/>
            <person name="Kucherlapati R."/>
            <person name="Rahme L.G."/>
            <person name="Ausubel F.M."/>
        </authorList>
    </citation>
    <scope>NUCLEOTIDE SEQUENCE [LARGE SCALE GENOMIC DNA]</scope>
    <source>
        <strain>UCBPP-PA14</strain>
    </source>
</reference>
<dbReference type="EMBL" id="CP000438">
    <property type="protein sequence ID" value="ABJ12888.1"/>
    <property type="molecule type" value="Genomic_DNA"/>
</dbReference>
<dbReference type="RefSeq" id="WP_003092393.1">
    <property type="nucleotide sequence ID" value="NZ_CP034244.1"/>
</dbReference>
<dbReference type="SMR" id="Q02RC7"/>
<dbReference type="GeneID" id="77219864"/>
<dbReference type="KEGG" id="pau:PA14_17070"/>
<dbReference type="PseudoCAP" id="PA14_17070"/>
<dbReference type="HOGENOM" id="CLU_047155_0_2_6"/>
<dbReference type="BioCyc" id="PAER208963:G1G74-1406-MONOMER"/>
<dbReference type="Proteomes" id="UP000000653">
    <property type="component" value="Chromosome"/>
</dbReference>
<dbReference type="GO" id="GO:0005737">
    <property type="term" value="C:cytoplasm"/>
    <property type="evidence" value="ECO:0007669"/>
    <property type="project" value="UniProtKB-SubCell"/>
</dbReference>
<dbReference type="GO" id="GO:0003746">
    <property type="term" value="F:translation elongation factor activity"/>
    <property type="evidence" value="ECO:0007669"/>
    <property type="project" value="UniProtKB-UniRule"/>
</dbReference>
<dbReference type="CDD" id="cd14275">
    <property type="entry name" value="UBA_EF-Ts"/>
    <property type="match status" value="1"/>
</dbReference>
<dbReference type="FunFam" id="1.10.286.20:FF:000001">
    <property type="entry name" value="Elongation factor Ts"/>
    <property type="match status" value="1"/>
</dbReference>
<dbReference type="FunFam" id="1.10.8.10:FF:000001">
    <property type="entry name" value="Elongation factor Ts"/>
    <property type="match status" value="1"/>
</dbReference>
<dbReference type="Gene3D" id="1.10.286.20">
    <property type="match status" value="1"/>
</dbReference>
<dbReference type="Gene3D" id="1.10.8.10">
    <property type="entry name" value="DNA helicase RuvA subunit, C-terminal domain"/>
    <property type="match status" value="1"/>
</dbReference>
<dbReference type="Gene3D" id="3.30.479.20">
    <property type="entry name" value="Elongation factor Ts, dimerisation domain"/>
    <property type="match status" value="2"/>
</dbReference>
<dbReference type="HAMAP" id="MF_00050">
    <property type="entry name" value="EF_Ts"/>
    <property type="match status" value="1"/>
</dbReference>
<dbReference type="InterPro" id="IPR036402">
    <property type="entry name" value="EF-Ts_dimer_sf"/>
</dbReference>
<dbReference type="InterPro" id="IPR001816">
    <property type="entry name" value="Transl_elong_EFTs/EF1B"/>
</dbReference>
<dbReference type="InterPro" id="IPR014039">
    <property type="entry name" value="Transl_elong_EFTs/EF1B_dimer"/>
</dbReference>
<dbReference type="InterPro" id="IPR018101">
    <property type="entry name" value="Transl_elong_Ts_CS"/>
</dbReference>
<dbReference type="InterPro" id="IPR009060">
    <property type="entry name" value="UBA-like_sf"/>
</dbReference>
<dbReference type="NCBIfam" id="TIGR00116">
    <property type="entry name" value="tsf"/>
    <property type="match status" value="1"/>
</dbReference>
<dbReference type="PANTHER" id="PTHR11741">
    <property type="entry name" value="ELONGATION FACTOR TS"/>
    <property type="match status" value="1"/>
</dbReference>
<dbReference type="PANTHER" id="PTHR11741:SF0">
    <property type="entry name" value="ELONGATION FACTOR TS, MITOCHONDRIAL"/>
    <property type="match status" value="1"/>
</dbReference>
<dbReference type="Pfam" id="PF00889">
    <property type="entry name" value="EF_TS"/>
    <property type="match status" value="1"/>
</dbReference>
<dbReference type="SUPFAM" id="SSF54713">
    <property type="entry name" value="Elongation factor Ts (EF-Ts), dimerisation domain"/>
    <property type="match status" value="2"/>
</dbReference>
<dbReference type="SUPFAM" id="SSF46934">
    <property type="entry name" value="UBA-like"/>
    <property type="match status" value="1"/>
</dbReference>
<dbReference type="PROSITE" id="PS01126">
    <property type="entry name" value="EF_TS_1"/>
    <property type="match status" value="1"/>
</dbReference>
<dbReference type="PROSITE" id="PS01127">
    <property type="entry name" value="EF_TS_2"/>
    <property type="match status" value="1"/>
</dbReference>